<sequence>MAGRSAARRPRGDREPLGPRLRAPRPAREPRQSESRAERGLPPSQRSSVRSAASGHDRSTRGAPAGACKPRVKKKVRPRSSQSEKVGSSSRELTRSKKVTRSKNVTGTQVEEVTKIEEATQTEEVTVAEEVTQTDNMAKTEEMVQTEEMETPRLSVIVTHSNERYDLLVTPQQGNSEPVVQDLAQLVEEATGVPLPFQKLIFKGKSLKEMETPLSALGMQNGCRVMLIGEKSNPEEEVELKKLKDLEVSAEKIANHLQELNKELSGIQQGFLAKELQAEALCKLDRKVKATIEQFMKILEEIDTMVLPEQFKDSRLKRKNLVKKVQVFLAECDTVEQYICQETERLQSTNLALAE</sequence>
<reference key="1">
    <citation type="journal article" date="1995" name="Cell">
        <title>Cloning and functional analysis of BAG-1: a novel Bcl-2-binding protein with anti-cell death activity.</title>
        <authorList>
            <person name="Takayama S."/>
            <person name="Sato T."/>
            <person name="Krajewski S."/>
            <person name="Kochel K."/>
            <person name="Irie S."/>
            <person name="Millan J.A."/>
            <person name="Reed J.C."/>
        </authorList>
    </citation>
    <scope>NUCLEOTIDE SEQUENCE [MRNA] (ISOFORM 1)</scope>
    <source>
        <tissue>Embryo</tissue>
    </source>
</reference>
<reference key="2">
    <citation type="journal article" date="2005" name="Science">
        <title>The transcriptional landscape of the mammalian genome.</title>
        <authorList>
            <person name="Carninci P."/>
            <person name="Kasukawa T."/>
            <person name="Katayama S."/>
            <person name="Gough J."/>
            <person name="Frith M.C."/>
            <person name="Maeda N."/>
            <person name="Oyama R."/>
            <person name="Ravasi T."/>
            <person name="Lenhard B."/>
            <person name="Wells C."/>
            <person name="Kodzius R."/>
            <person name="Shimokawa K."/>
            <person name="Bajic V.B."/>
            <person name="Brenner S.E."/>
            <person name="Batalov S."/>
            <person name="Forrest A.R."/>
            <person name="Zavolan M."/>
            <person name="Davis M.J."/>
            <person name="Wilming L.G."/>
            <person name="Aidinis V."/>
            <person name="Allen J.E."/>
            <person name="Ambesi-Impiombato A."/>
            <person name="Apweiler R."/>
            <person name="Aturaliya R.N."/>
            <person name="Bailey T.L."/>
            <person name="Bansal M."/>
            <person name="Baxter L."/>
            <person name="Beisel K.W."/>
            <person name="Bersano T."/>
            <person name="Bono H."/>
            <person name="Chalk A.M."/>
            <person name="Chiu K.P."/>
            <person name="Choudhary V."/>
            <person name="Christoffels A."/>
            <person name="Clutterbuck D.R."/>
            <person name="Crowe M.L."/>
            <person name="Dalla E."/>
            <person name="Dalrymple B.P."/>
            <person name="de Bono B."/>
            <person name="Della Gatta G."/>
            <person name="di Bernardo D."/>
            <person name="Down T."/>
            <person name="Engstrom P."/>
            <person name="Fagiolini M."/>
            <person name="Faulkner G."/>
            <person name="Fletcher C.F."/>
            <person name="Fukushima T."/>
            <person name="Furuno M."/>
            <person name="Futaki S."/>
            <person name="Gariboldi M."/>
            <person name="Georgii-Hemming P."/>
            <person name="Gingeras T.R."/>
            <person name="Gojobori T."/>
            <person name="Green R.E."/>
            <person name="Gustincich S."/>
            <person name="Harbers M."/>
            <person name="Hayashi Y."/>
            <person name="Hensch T.K."/>
            <person name="Hirokawa N."/>
            <person name="Hill D."/>
            <person name="Huminiecki L."/>
            <person name="Iacono M."/>
            <person name="Ikeo K."/>
            <person name="Iwama A."/>
            <person name="Ishikawa T."/>
            <person name="Jakt M."/>
            <person name="Kanapin A."/>
            <person name="Katoh M."/>
            <person name="Kawasawa Y."/>
            <person name="Kelso J."/>
            <person name="Kitamura H."/>
            <person name="Kitano H."/>
            <person name="Kollias G."/>
            <person name="Krishnan S.P."/>
            <person name="Kruger A."/>
            <person name="Kummerfeld S.K."/>
            <person name="Kurochkin I.V."/>
            <person name="Lareau L.F."/>
            <person name="Lazarevic D."/>
            <person name="Lipovich L."/>
            <person name="Liu J."/>
            <person name="Liuni S."/>
            <person name="McWilliam S."/>
            <person name="Madan Babu M."/>
            <person name="Madera M."/>
            <person name="Marchionni L."/>
            <person name="Matsuda H."/>
            <person name="Matsuzawa S."/>
            <person name="Miki H."/>
            <person name="Mignone F."/>
            <person name="Miyake S."/>
            <person name="Morris K."/>
            <person name="Mottagui-Tabar S."/>
            <person name="Mulder N."/>
            <person name="Nakano N."/>
            <person name="Nakauchi H."/>
            <person name="Ng P."/>
            <person name="Nilsson R."/>
            <person name="Nishiguchi S."/>
            <person name="Nishikawa S."/>
            <person name="Nori F."/>
            <person name="Ohara O."/>
            <person name="Okazaki Y."/>
            <person name="Orlando V."/>
            <person name="Pang K.C."/>
            <person name="Pavan W.J."/>
            <person name="Pavesi G."/>
            <person name="Pesole G."/>
            <person name="Petrovsky N."/>
            <person name="Piazza S."/>
            <person name="Reed J."/>
            <person name="Reid J.F."/>
            <person name="Ring B.Z."/>
            <person name="Ringwald M."/>
            <person name="Rost B."/>
            <person name="Ruan Y."/>
            <person name="Salzberg S.L."/>
            <person name="Sandelin A."/>
            <person name="Schneider C."/>
            <person name="Schoenbach C."/>
            <person name="Sekiguchi K."/>
            <person name="Semple C.A."/>
            <person name="Seno S."/>
            <person name="Sessa L."/>
            <person name="Sheng Y."/>
            <person name="Shibata Y."/>
            <person name="Shimada H."/>
            <person name="Shimada K."/>
            <person name="Silva D."/>
            <person name="Sinclair B."/>
            <person name="Sperling S."/>
            <person name="Stupka E."/>
            <person name="Sugiura K."/>
            <person name="Sultana R."/>
            <person name="Takenaka Y."/>
            <person name="Taki K."/>
            <person name="Tammoja K."/>
            <person name="Tan S.L."/>
            <person name="Tang S."/>
            <person name="Taylor M.S."/>
            <person name="Tegner J."/>
            <person name="Teichmann S.A."/>
            <person name="Ueda H.R."/>
            <person name="van Nimwegen E."/>
            <person name="Verardo R."/>
            <person name="Wei C.L."/>
            <person name="Yagi K."/>
            <person name="Yamanishi H."/>
            <person name="Zabarovsky E."/>
            <person name="Zhu S."/>
            <person name="Zimmer A."/>
            <person name="Hide W."/>
            <person name="Bult C."/>
            <person name="Grimmond S.M."/>
            <person name="Teasdale R.D."/>
            <person name="Liu E.T."/>
            <person name="Brusic V."/>
            <person name="Quackenbush J."/>
            <person name="Wahlestedt C."/>
            <person name="Mattick J.S."/>
            <person name="Hume D.A."/>
            <person name="Kai C."/>
            <person name="Sasaki D."/>
            <person name="Tomaru Y."/>
            <person name="Fukuda S."/>
            <person name="Kanamori-Katayama M."/>
            <person name="Suzuki M."/>
            <person name="Aoki J."/>
            <person name="Arakawa T."/>
            <person name="Iida J."/>
            <person name="Imamura K."/>
            <person name="Itoh M."/>
            <person name="Kato T."/>
            <person name="Kawaji H."/>
            <person name="Kawagashira N."/>
            <person name="Kawashima T."/>
            <person name="Kojima M."/>
            <person name="Kondo S."/>
            <person name="Konno H."/>
            <person name="Nakano K."/>
            <person name="Ninomiya N."/>
            <person name="Nishio T."/>
            <person name="Okada M."/>
            <person name="Plessy C."/>
            <person name="Shibata K."/>
            <person name="Shiraki T."/>
            <person name="Suzuki S."/>
            <person name="Tagami M."/>
            <person name="Waki K."/>
            <person name="Watahiki A."/>
            <person name="Okamura-Oho Y."/>
            <person name="Suzuki H."/>
            <person name="Kawai J."/>
            <person name="Hayashizaki Y."/>
        </authorList>
    </citation>
    <scope>NUCLEOTIDE SEQUENCE [LARGE SCALE MRNA] (ISOFORM 2)</scope>
    <source>
        <strain>C57BL/6J</strain>
        <tissue>Tongue</tissue>
    </source>
</reference>
<reference key="3">
    <citation type="journal article" date="2009" name="PLoS Biol.">
        <title>Lineage-specific biology revealed by a finished genome assembly of the mouse.</title>
        <authorList>
            <person name="Church D.M."/>
            <person name="Goodstadt L."/>
            <person name="Hillier L.W."/>
            <person name="Zody M.C."/>
            <person name="Goldstein S."/>
            <person name="She X."/>
            <person name="Bult C.J."/>
            <person name="Agarwala R."/>
            <person name="Cherry J.L."/>
            <person name="DiCuccio M."/>
            <person name="Hlavina W."/>
            <person name="Kapustin Y."/>
            <person name="Meric P."/>
            <person name="Maglott D."/>
            <person name="Birtle Z."/>
            <person name="Marques A.C."/>
            <person name="Graves T."/>
            <person name="Zhou S."/>
            <person name="Teague B."/>
            <person name="Potamousis K."/>
            <person name="Churas C."/>
            <person name="Place M."/>
            <person name="Herschleb J."/>
            <person name="Runnheim R."/>
            <person name="Forrest D."/>
            <person name="Amos-Landgraf J."/>
            <person name="Schwartz D.C."/>
            <person name="Cheng Z."/>
            <person name="Lindblad-Toh K."/>
            <person name="Eichler E.E."/>
            <person name="Ponting C.P."/>
        </authorList>
    </citation>
    <scope>NUCLEOTIDE SEQUENCE [LARGE SCALE GENOMIC DNA]</scope>
    <source>
        <strain>C57BL/6J</strain>
    </source>
</reference>
<reference key="4">
    <citation type="submission" date="2005-09" db="EMBL/GenBank/DDBJ databases">
        <authorList>
            <person name="Mural R.J."/>
            <person name="Adams M.D."/>
            <person name="Myers E.W."/>
            <person name="Smith H.O."/>
            <person name="Venter J.C."/>
        </authorList>
    </citation>
    <scope>NUCLEOTIDE SEQUENCE [LARGE SCALE GENOMIC DNA]</scope>
</reference>
<reference key="5">
    <citation type="journal article" date="2004" name="Genome Res.">
        <title>The status, quality, and expansion of the NIH full-length cDNA project: the Mammalian Gene Collection (MGC).</title>
        <authorList>
            <consortium name="The MGC Project Team"/>
        </authorList>
    </citation>
    <scope>NUCLEOTIDE SEQUENCE [LARGE SCALE MRNA] (ISOFORM 1)</scope>
    <source>
        <strain>Czech II</strain>
        <strain>NMRI</strain>
        <tissue>Mammary tumor</tissue>
    </source>
</reference>
<reference key="6">
    <citation type="journal article" date="1997" name="Biochem. J.">
        <title>Mammalian cells express two differently localized Bag-1 isoforms generated by alternative translation initiation.</title>
        <authorList>
            <person name="Packham G."/>
            <person name="Brimmell M."/>
            <person name="Cleveland J.L."/>
        </authorList>
    </citation>
    <scope>IDENTIFICATION OF ISOFORMS 1 AND 2</scope>
    <scope>ALTERNATIVE INITIATION</scope>
    <scope>SUBCELLULAR LOCATION</scope>
    <scope>TISSUE SPECIFICITY</scope>
</reference>
<reference key="7">
    <citation type="journal article" date="1998" name="Cancer Res.">
        <title>Expression and location of Hsp70/Hsc-binding anti-apoptotic protein BAG-1 and its variants in normal tissues and tumor cell lines.</title>
        <authorList>
            <person name="Takayama S."/>
            <person name="Krajewski S."/>
            <person name="Krajewska M."/>
            <person name="Kitada S."/>
            <person name="Zapata J.M."/>
            <person name="Kochel K."/>
            <person name="Knee D."/>
            <person name="Scudiero D."/>
            <person name="Tudor G."/>
            <person name="Miller G.J."/>
            <person name="Miyashita T."/>
            <person name="Yamada M."/>
            <person name="Reed J.C."/>
        </authorList>
    </citation>
    <scope>IDENTIFICATION OF ISOFORMS 1 AND 2</scope>
    <scope>ALTERNATIVE INITIATION</scope>
    <scope>SUBCELLULAR LOCATION</scope>
    <scope>TISSUE SPECIFICITY</scope>
</reference>
<reference key="8">
    <citation type="journal article" date="1999" name="J. Biol. Chem.">
        <title>An evolutionarily conserved family of Hsp70/Hsc70 molecular chaperone regulators.</title>
        <authorList>
            <person name="Takayama S."/>
            <person name="Xie Z."/>
            <person name="Reed J.C."/>
        </authorList>
    </citation>
    <scope>FUNCTION</scope>
</reference>
<reference key="9">
    <citation type="journal article" date="2001" name="J. Cell Sci.">
        <title>Alteration of the stability of Bag-1 protein in the control of olfactory neuronal apoptosis.</title>
        <authorList>
            <person name="Sourisseau T."/>
            <person name="Desbois C."/>
            <person name="Debure L."/>
            <person name="Bowtell D.D.L."/>
            <person name="Cato A.C.B."/>
            <person name="Schneikert J."/>
            <person name="Moyse E."/>
            <person name="Michel D."/>
        </authorList>
    </citation>
    <scope>INTERACTION WITH SIAH2</scope>
    <scope>UBIQUITINATION</scope>
</reference>
<reference key="10">
    <citation type="journal article" date="2010" name="Cell">
        <title>A tissue-specific atlas of mouse protein phosphorylation and expression.</title>
        <authorList>
            <person name="Huttlin E.L."/>
            <person name="Jedrychowski M.P."/>
            <person name="Elias J.E."/>
            <person name="Goswami T."/>
            <person name="Rad R."/>
            <person name="Beausoleil S.A."/>
            <person name="Villen J."/>
            <person name="Haas W."/>
            <person name="Sowa M.E."/>
            <person name="Gygi S.P."/>
        </authorList>
    </citation>
    <scope>IDENTIFICATION BY MASS SPECTROMETRY [LARGE SCALE ANALYSIS]</scope>
    <source>
        <tissue>Brain</tissue>
        <tissue>Heart</tissue>
        <tissue>Kidney</tissue>
        <tissue>Lung</tissue>
        <tissue>Spleen</tissue>
        <tissue>Testis</tissue>
    </source>
</reference>
<comment type="function">
    <text evidence="2 3 10">Co-chaperone for HSP70 and HSC70 chaperone proteins (PubMed:9873016). Acts as a nucleotide-exchange factor (NEF) promoting the release of ADP from the HSP70 and HSC70 proteins thereby triggering client/substrate protein release. Nucleotide release is mediated via its binding to the nucleotide-binding domain (NBD) of HSPA8/HSC70 where as the substrate release is mediated via its binding to the substrate-binding domain (SBD) of HSPA8/HSC70. Inhibits the pro-apoptotic function of PPP1R15A, and has anti-apoptotic activity. Markedly increases the anti-cell death function of BCL2 induced by various stimuli (By similarity). Involved in the STUB1-mediated proteasomal degradation of ESR1 in response to age-related circulating estradiol (17-beta-estradiol/E2) decline, thereby promotes neuronal apoptosis in response to ischemic reperfusion injury (By similarity).</text>
</comment>
<comment type="subunit">
    <text evidence="2 3 7">Homodimer. Forms a heteromeric complex with HSP70/HSC70. Binds to the ATPase domain of HSP/HSC70 chaperones. Interacts with NR3C1. Interacts with the N-terminal region of MAPRE2. Interacts with PPP1R15A. Interacts with BCL2 in an ATP-dependent manner. Interacts with SIAH1, HSPA8 (via NBD), HSPA1A (via NBD) and HSPA1B (via NBD) (By similarity). Interacts with SIAH2 (PubMed:11257006). Interacts with ESR1; the interaction is promoted in the absence of estradiol (17-beta-estradiol/E2) (By similarity).</text>
</comment>
<comment type="subcellular location">
    <molecule>Isoform 1</molecule>
    <subcellularLocation>
        <location>Nucleus</location>
    </subcellularLocation>
</comment>
<comment type="subcellular location">
    <molecule>Isoform 2</molecule>
    <subcellularLocation>
        <location>Cytoplasm</location>
    </subcellularLocation>
</comment>
<comment type="alternative products">
    <event type="alternative initiation"/>
    <isoform>
        <id>Q60739-1</id>
        <name>1</name>
        <name>BAG-1L</name>
        <name>p50</name>
        <sequence type="displayed"/>
    </isoform>
    <isoform>
        <id>Q60739-2</id>
        <name>2</name>
        <name>BAG-1S</name>
        <name>p32</name>
        <sequence type="described" ref="VSP_018667"/>
    </isoform>
</comment>
<comment type="tissue specificity">
    <text evidence="8 9">Isoform 2 is expressed in the heart, lung, kidney and spinal cord. Isoform 1 and isoform 2 are expressed in hematopoietic cell lines. The levels of isoform 2 are relatively constant in all the cell lines examined while the levels of isoform 1 are more variable (at protein level). Isoform 1 is expressed in the lung and kidney. Isoform 2 is expressed in various tissues, with highest levels in testis and stomach.</text>
</comment>
<comment type="PTM">
    <text evidence="13">Ubiquitinated; mediated by SIAH1 or SIAH2 and leading to its subsequent proteasomal degradation.</text>
</comment>
<feature type="chain" id="PRO_0000002782" description="BAG family molecular chaperone regulator 1">
    <location>
        <begin position="1"/>
        <end position="355"/>
    </location>
</feature>
<feature type="repeat" description="1">
    <location>
        <begin position="103"/>
        <end position="108"/>
    </location>
</feature>
<feature type="repeat" description="2">
    <location>
        <begin position="111"/>
        <end position="116"/>
    </location>
</feature>
<feature type="repeat" description="3">
    <location>
        <begin position="117"/>
        <end position="122"/>
    </location>
</feature>
<feature type="repeat" description="4">
    <location>
        <begin position="123"/>
        <end position="128"/>
    </location>
</feature>
<feature type="repeat" description="5">
    <location>
        <begin position="129"/>
        <end position="134"/>
    </location>
</feature>
<feature type="repeat" description="6">
    <location>
        <begin position="141"/>
        <end position="146"/>
    </location>
</feature>
<feature type="repeat" description="7">
    <location>
        <begin position="147"/>
        <end position="152"/>
    </location>
</feature>
<feature type="domain" description="Ubiquitin-like" evidence="4">
    <location>
        <begin position="154"/>
        <end position="234"/>
    </location>
</feature>
<feature type="domain" description="BAG" evidence="5">
    <location>
        <begin position="256"/>
        <end position="336"/>
    </location>
</feature>
<feature type="region of interest" description="Disordered" evidence="6">
    <location>
        <begin position="1"/>
        <end position="112"/>
    </location>
</feature>
<feature type="region of interest" description="7 X 6 AA tandem repeat of E-E-X(4)">
    <location>
        <begin position="111"/>
        <end position="209"/>
    </location>
</feature>
<feature type="region of interest" description="Disordered" evidence="6">
    <location>
        <begin position="132"/>
        <end position="151"/>
    </location>
</feature>
<feature type="region of interest" description="Interaction with HSPA8" evidence="1">
    <location>
        <begin position="182"/>
        <end position="229"/>
    </location>
</feature>
<feature type="region of interest" description="Interaction with PPP1R15A" evidence="1">
    <location>
        <begin position="226"/>
        <end position="355"/>
    </location>
</feature>
<feature type="compositionally biased region" description="Basic and acidic residues" evidence="6">
    <location>
        <begin position="26"/>
        <end position="39"/>
    </location>
</feature>
<feature type="compositionally biased region" description="Polar residues" evidence="6">
    <location>
        <begin position="80"/>
        <end position="91"/>
    </location>
</feature>
<feature type="compositionally biased region" description="Polar residues" evidence="6">
    <location>
        <begin position="102"/>
        <end position="111"/>
    </location>
</feature>
<feature type="splice variant" id="VSP_018667" description="In isoform 2." evidence="11">
    <location>
        <begin position="1"/>
        <end position="136"/>
    </location>
</feature>
<feature type="sequence conflict" description="In Ref. 5; AAH93509/AAH69918/AAH03722." evidence="12" ref="5">
    <original>P</original>
    <variation>A</variation>
    <location>
        <position position="64"/>
    </location>
</feature>
<feature type="strand" evidence="15">
    <location>
        <begin position="149"/>
        <end position="153"/>
    </location>
</feature>
<feature type="strand" evidence="15">
    <location>
        <begin position="155"/>
        <end position="160"/>
    </location>
</feature>
<feature type="strand" evidence="15">
    <location>
        <begin position="163"/>
        <end position="168"/>
    </location>
</feature>
<feature type="strand" evidence="15">
    <location>
        <begin position="171"/>
        <end position="173"/>
    </location>
</feature>
<feature type="strand" evidence="15">
    <location>
        <begin position="175"/>
        <end position="177"/>
    </location>
</feature>
<feature type="helix" evidence="15">
    <location>
        <begin position="180"/>
        <end position="191"/>
    </location>
</feature>
<feature type="helix" evidence="15">
    <location>
        <begin position="195"/>
        <end position="197"/>
    </location>
</feature>
<feature type="strand" evidence="15">
    <location>
        <begin position="200"/>
        <end position="202"/>
    </location>
</feature>
<feature type="strand" evidence="16">
    <location>
        <begin position="205"/>
        <end position="210"/>
    </location>
</feature>
<feature type="turn" evidence="15">
    <location>
        <begin position="215"/>
        <end position="218"/>
    </location>
</feature>
<feature type="strand" evidence="15">
    <location>
        <begin position="220"/>
        <end position="222"/>
    </location>
</feature>
<feature type="strand" evidence="14">
    <location>
        <begin position="226"/>
        <end position="228"/>
    </location>
</feature>
<feature type="helix" evidence="14">
    <location>
        <begin position="234"/>
        <end position="268"/>
    </location>
</feature>
<feature type="strand" evidence="14">
    <location>
        <begin position="270"/>
        <end position="272"/>
    </location>
</feature>
<feature type="helix" evidence="14">
    <location>
        <begin position="274"/>
        <end position="303"/>
    </location>
</feature>
<feature type="helix" evidence="14">
    <location>
        <begin position="312"/>
        <end position="346"/>
    </location>
</feature>
<evidence type="ECO:0000250" key="1"/>
<evidence type="ECO:0000250" key="2">
    <source>
        <dbReference type="UniProtKB" id="B0K019"/>
    </source>
</evidence>
<evidence type="ECO:0000250" key="3">
    <source>
        <dbReference type="UniProtKB" id="Q99933"/>
    </source>
</evidence>
<evidence type="ECO:0000255" key="4">
    <source>
        <dbReference type="PROSITE-ProRule" id="PRU00214"/>
    </source>
</evidence>
<evidence type="ECO:0000255" key="5">
    <source>
        <dbReference type="PROSITE-ProRule" id="PRU00369"/>
    </source>
</evidence>
<evidence type="ECO:0000256" key="6">
    <source>
        <dbReference type="SAM" id="MobiDB-lite"/>
    </source>
</evidence>
<evidence type="ECO:0000269" key="7">
    <source>
    </source>
</evidence>
<evidence type="ECO:0000269" key="8">
    <source>
    </source>
</evidence>
<evidence type="ECO:0000269" key="9">
    <source>
    </source>
</evidence>
<evidence type="ECO:0000269" key="10">
    <source>
    </source>
</evidence>
<evidence type="ECO:0000303" key="11">
    <source>
    </source>
</evidence>
<evidence type="ECO:0000305" key="12"/>
<evidence type="ECO:0000305" key="13">
    <source>
    </source>
</evidence>
<evidence type="ECO:0007829" key="14">
    <source>
        <dbReference type="PDB" id="1I6Z"/>
    </source>
</evidence>
<evidence type="ECO:0007829" key="15">
    <source>
        <dbReference type="PDB" id="2LWP"/>
    </source>
</evidence>
<evidence type="ECO:0007829" key="16">
    <source>
        <dbReference type="PDB" id="2M8S"/>
    </source>
</evidence>
<gene>
    <name type="primary">Bag1</name>
</gene>
<keyword id="KW-0002">3D-structure</keyword>
<keyword id="KW-0024">Alternative initiation</keyword>
<keyword id="KW-0053">Apoptosis</keyword>
<keyword id="KW-0143">Chaperone</keyword>
<keyword id="KW-0963">Cytoplasm</keyword>
<keyword id="KW-0539">Nucleus</keyword>
<keyword id="KW-1185">Reference proteome</keyword>
<keyword id="KW-0677">Repeat</keyword>
<keyword id="KW-0832">Ubl conjugation</keyword>
<dbReference type="EMBL" id="AF022223">
    <property type="protein sequence ID" value="AAC34259.1"/>
    <property type="molecule type" value="mRNA"/>
</dbReference>
<dbReference type="EMBL" id="AK009149">
    <property type="protein sequence ID" value="BAB26106.1"/>
    <property type="molecule type" value="mRNA"/>
</dbReference>
<dbReference type="EMBL" id="AL837521">
    <property type="status" value="NOT_ANNOTATED_CDS"/>
    <property type="molecule type" value="Genomic_DNA"/>
</dbReference>
<dbReference type="EMBL" id="CH466538">
    <property type="protein sequence ID" value="EDL05422.1"/>
    <property type="molecule type" value="Genomic_DNA"/>
</dbReference>
<dbReference type="EMBL" id="BC003722">
    <property type="protein sequence ID" value="AAH03722.2"/>
    <property type="molecule type" value="mRNA"/>
</dbReference>
<dbReference type="EMBL" id="BC069918">
    <property type="protein sequence ID" value="AAH69918.2"/>
    <property type="molecule type" value="mRNA"/>
</dbReference>
<dbReference type="EMBL" id="BC093509">
    <property type="protein sequence ID" value="AAH93509.2"/>
    <property type="molecule type" value="mRNA"/>
</dbReference>
<dbReference type="CCDS" id="CCDS38713.1">
    <molecule id="Q60739-1"/>
</dbReference>
<dbReference type="CCDS" id="CCDS51139.1">
    <molecule id="Q60739-2"/>
</dbReference>
<dbReference type="RefSeq" id="NP_001165210.1">
    <molecule id="Q60739-2"/>
    <property type="nucleotide sequence ID" value="NM_001171739.1"/>
</dbReference>
<dbReference type="RefSeq" id="NP_033866.4">
    <property type="nucleotide sequence ID" value="NM_009736.3"/>
</dbReference>
<dbReference type="PDB" id="1I6Z">
    <property type="method" value="NMR"/>
    <property type="chains" value="A=226-355"/>
</dbReference>
<dbReference type="PDB" id="2LWP">
    <property type="method" value="NMR"/>
    <property type="chains" value="A=137-233"/>
</dbReference>
<dbReference type="PDB" id="2M8S">
    <property type="method" value="NMR"/>
    <property type="chains" value="A=137-233"/>
</dbReference>
<dbReference type="PDBsum" id="1I6Z"/>
<dbReference type="PDBsum" id="2LWP"/>
<dbReference type="PDBsum" id="2M8S"/>
<dbReference type="BMRB" id="Q60739"/>
<dbReference type="SMR" id="Q60739"/>
<dbReference type="BioGRID" id="198298">
    <property type="interactions" value="29"/>
</dbReference>
<dbReference type="DIP" id="DIP-272N"/>
<dbReference type="FunCoup" id="Q60739">
    <property type="interactions" value="1778"/>
</dbReference>
<dbReference type="STRING" id="10090.ENSMUSP00000030125"/>
<dbReference type="iPTMnet" id="Q60739"/>
<dbReference type="PhosphoSitePlus" id="Q60739"/>
<dbReference type="PaxDb" id="10090-ENSMUSP00000030125"/>
<dbReference type="ProteomicsDB" id="277103">
    <molecule id="Q60739-1"/>
</dbReference>
<dbReference type="ProteomicsDB" id="277104">
    <molecule id="Q60739-2"/>
</dbReference>
<dbReference type="Pumba" id="Q60739"/>
<dbReference type="Antibodypedia" id="2968">
    <property type="antibodies" value="550 antibodies from 41 providers"/>
</dbReference>
<dbReference type="DNASU" id="12017"/>
<dbReference type="Ensembl" id="ENSMUST00000108089.8">
    <molecule id="Q60739-2"/>
    <property type="protein sequence ID" value="ENSMUSP00000103724.2"/>
    <property type="gene ID" value="ENSMUSG00000028416.14"/>
</dbReference>
<dbReference type="Ensembl" id="ENSMUST00000191273.7">
    <molecule id="Q60739-2"/>
    <property type="protein sequence ID" value="ENSMUSP00000139864.2"/>
    <property type="gene ID" value="ENSMUSG00000028416.14"/>
</dbReference>
<dbReference type="GeneID" id="12017"/>
<dbReference type="KEGG" id="mmu:12017"/>
<dbReference type="AGR" id="MGI:108047"/>
<dbReference type="CTD" id="573"/>
<dbReference type="MGI" id="MGI:108047">
    <property type="gene designation" value="Bag1"/>
</dbReference>
<dbReference type="VEuPathDB" id="HostDB:ENSMUSG00000028416"/>
<dbReference type="eggNOG" id="ENOG502RN5W">
    <property type="taxonomic scope" value="Eukaryota"/>
</dbReference>
<dbReference type="GeneTree" id="ENSGT00450000040296"/>
<dbReference type="HOGENOM" id="CLU_055378_0_1_1"/>
<dbReference type="InParanoid" id="Q60739"/>
<dbReference type="OrthoDB" id="84781at9989"/>
<dbReference type="PhylomeDB" id="Q60739"/>
<dbReference type="Reactome" id="R-MMU-3371453">
    <property type="pathway name" value="Regulation of HSF1-mediated heat shock response"/>
</dbReference>
<dbReference type="BioGRID-ORCS" id="12017">
    <property type="hits" value="3 hits in 79 CRISPR screens"/>
</dbReference>
<dbReference type="ChiTaRS" id="Bag1">
    <property type="organism name" value="mouse"/>
</dbReference>
<dbReference type="EvolutionaryTrace" id="Q60739"/>
<dbReference type="PRO" id="PR:Q60739"/>
<dbReference type="Proteomes" id="UP000000589">
    <property type="component" value="Chromosome 4"/>
</dbReference>
<dbReference type="RNAct" id="Q60739">
    <property type="molecule type" value="protein"/>
</dbReference>
<dbReference type="Bgee" id="ENSMUSG00000028416">
    <property type="expression patterns" value="Expressed in seminiferous tubule of testis and 272 other cell types or tissues"/>
</dbReference>
<dbReference type="ExpressionAtlas" id="Q60739">
    <property type="expression patterns" value="baseline and differential"/>
</dbReference>
<dbReference type="GO" id="GO:0005737">
    <property type="term" value="C:cytoplasm"/>
    <property type="evidence" value="ECO:0000314"/>
    <property type="project" value="MGI"/>
</dbReference>
<dbReference type="GO" id="GO:0005829">
    <property type="term" value="C:cytosol"/>
    <property type="evidence" value="ECO:0000314"/>
    <property type="project" value="MGI"/>
</dbReference>
<dbReference type="GO" id="GO:0005634">
    <property type="term" value="C:nucleus"/>
    <property type="evidence" value="ECO:0000314"/>
    <property type="project" value="MGI"/>
</dbReference>
<dbReference type="GO" id="GO:0000774">
    <property type="term" value="F:adenyl-nucleotide exchange factor activity"/>
    <property type="evidence" value="ECO:0000250"/>
    <property type="project" value="UniProtKB"/>
</dbReference>
<dbReference type="GO" id="GO:0051219">
    <property type="term" value="F:phosphoprotein binding"/>
    <property type="evidence" value="ECO:0000353"/>
    <property type="project" value="MGI"/>
</dbReference>
<dbReference type="GO" id="GO:0051087">
    <property type="term" value="F:protein-folding chaperone binding"/>
    <property type="evidence" value="ECO:0007669"/>
    <property type="project" value="InterPro"/>
</dbReference>
<dbReference type="GO" id="GO:0006915">
    <property type="term" value="P:apoptotic process"/>
    <property type="evidence" value="ECO:0000315"/>
    <property type="project" value="MGI"/>
</dbReference>
<dbReference type="GO" id="GO:0043066">
    <property type="term" value="P:negative regulation of apoptotic process"/>
    <property type="evidence" value="ECO:0000315"/>
    <property type="project" value="MGI"/>
</dbReference>
<dbReference type="GO" id="GO:2000672">
    <property type="term" value="P:negative regulation of motor neuron apoptotic process"/>
    <property type="evidence" value="ECO:0000315"/>
    <property type="project" value="MGI"/>
</dbReference>
<dbReference type="GO" id="GO:0030182">
    <property type="term" value="P:neuron differentiation"/>
    <property type="evidence" value="ECO:0000314"/>
    <property type="project" value="MGI"/>
</dbReference>
<dbReference type="GO" id="GO:0043525">
    <property type="term" value="P:positive regulation of neuron apoptotic process"/>
    <property type="evidence" value="ECO:0000314"/>
    <property type="project" value="MGI"/>
</dbReference>
<dbReference type="GO" id="GO:0034393">
    <property type="term" value="P:positive regulation of smooth muscle cell apoptotic process"/>
    <property type="evidence" value="ECO:0000250"/>
    <property type="project" value="UniProtKB"/>
</dbReference>
<dbReference type="GO" id="GO:0045944">
    <property type="term" value="P:positive regulation of transcription by RNA polymerase II"/>
    <property type="evidence" value="ECO:0000314"/>
    <property type="project" value="MGI"/>
</dbReference>
<dbReference type="GO" id="GO:0070585">
    <property type="term" value="P:protein localization to mitochondrion"/>
    <property type="evidence" value="ECO:0000315"/>
    <property type="project" value="MGI"/>
</dbReference>
<dbReference type="CDD" id="cd01812">
    <property type="entry name" value="Ubl_BAG1"/>
    <property type="match status" value="1"/>
</dbReference>
<dbReference type="FunFam" id="1.20.58.120:FF:000005">
    <property type="entry name" value="BAG family molecular chaperone regulator 1"/>
    <property type="match status" value="1"/>
</dbReference>
<dbReference type="FunFam" id="3.10.20.90:FF:000237">
    <property type="entry name" value="BAG family molecular chaperone regulator 1"/>
    <property type="match status" value="1"/>
</dbReference>
<dbReference type="Gene3D" id="1.20.58.120">
    <property type="entry name" value="BAG domain"/>
    <property type="match status" value="1"/>
</dbReference>
<dbReference type="Gene3D" id="3.10.20.90">
    <property type="entry name" value="Phosphatidylinositol 3-kinase Catalytic Subunit, Chain A, domain 1"/>
    <property type="match status" value="1"/>
</dbReference>
<dbReference type="IDEAL" id="IID50180"/>
<dbReference type="InterPro" id="IPR039773">
    <property type="entry name" value="BAG_chaperone_regulator"/>
</dbReference>
<dbReference type="InterPro" id="IPR036533">
    <property type="entry name" value="BAG_dom_sf"/>
</dbReference>
<dbReference type="InterPro" id="IPR003103">
    <property type="entry name" value="BAG_domain"/>
</dbReference>
<dbReference type="InterPro" id="IPR000626">
    <property type="entry name" value="Ubiquitin-like_dom"/>
</dbReference>
<dbReference type="InterPro" id="IPR029071">
    <property type="entry name" value="Ubiquitin-like_domsf"/>
</dbReference>
<dbReference type="PANTHER" id="PTHR12329:SF16">
    <property type="entry name" value="BAG FAMILY MOLECULAR CHAPERONE REGULATOR 1"/>
    <property type="match status" value="1"/>
</dbReference>
<dbReference type="PANTHER" id="PTHR12329">
    <property type="entry name" value="BCL2-ASSOCIATED ATHANOGENE"/>
    <property type="match status" value="1"/>
</dbReference>
<dbReference type="Pfam" id="PF02179">
    <property type="entry name" value="BAG"/>
    <property type="match status" value="1"/>
</dbReference>
<dbReference type="Pfam" id="PF00240">
    <property type="entry name" value="ubiquitin"/>
    <property type="match status" value="1"/>
</dbReference>
<dbReference type="SMART" id="SM00264">
    <property type="entry name" value="BAG"/>
    <property type="match status" value="1"/>
</dbReference>
<dbReference type="SMART" id="SM00213">
    <property type="entry name" value="UBQ"/>
    <property type="match status" value="1"/>
</dbReference>
<dbReference type="SUPFAM" id="SSF63491">
    <property type="entry name" value="BAG domain"/>
    <property type="match status" value="1"/>
</dbReference>
<dbReference type="SUPFAM" id="SSF54236">
    <property type="entry name" value="Ubiquitin-like"/>
    <property type="match status" value="1"/>
</dbReference>
<dbReference type="PROSITE" id="PS51035">
    <property type="entry name" value="BAG"/>
    <property type="match status" value="1"/>
</dbReference>
<dbReference type="PROSITE" id="PS50053">
    <property type="entry name" value="UBIQUITIN_2"/>
    <property type="match status" value="1"/>
</dbReference>
<name>BAG1_MOUSE</name>
<accession>Q60739</accession>
<accession>Q561N1</accession>
<accession>Q6IS45</accession>
<accession>Q9D7K6</accession>
<proteinExistence type="evidence at protein level"/>
<protein>
    <recommendedName>
        <fullName>BAG family molecular chaperone regulator 1</fullName>
        <shortName>BAG-1</shortName>
    </recommendedName>
    <alternativeName>
        <fullName>Bcl-2-associated athanogene 1</fullName>
    </alternativeName>
</protein>
<organism>
    <name type="scientific">Mus musculus</name>
    <name type="common">Mouse</name>
    <dbReference type="NCBI Taxonomy" id="10090"/>
    <lineage>
        <taxon>Eukaryota</taxon>
        <taxon>Metazoa</taxon>
        <taxon>Chordata</taxon>
        <taxon>Craniata</taxon>
        <taxon>Vertebrata</taxon>
        <taxon>Euteleostomi</taxon>
        <taxon>Mammalia</taxon>
        <taxon>Eutheria</taxon>
        <taxon>Euarchontoglires</taxon>
        <taxon>Glires</taxon>
        <taxon>Rodentia</taxon>
        <taxon>Myomorpha</taxon>
        <taxon>Muroidea</taxon>
        <taxon>Muridae</taxon>
        <taxon>Murinae</taxon>
        <taxon>Mus</taxon>
        <taxon>Mus</taxon>
    </lineage>
</organism>